<sequence length="175" mass="19317">MFIFLFGLAAFFLCLSAEFQKAKALLRAQVFLKGKDLKWDGESCYLPENRAFGLGIAALVCVSVAQIVGNVVICRGFTKTDKTRTTIFCIILLLFSWVNFAVAVTLISVGASMNREQIYGKGWLNRECYLVKDGVFAASGFLSVTTMAAILGAFAFKVKPSLQVENHDKRHTQNV</sequence>
<organism>
    <name type="scientific">Arabidopsis thaliana</name>
    <name type="common">Mouse-ear cress</name>
    <dbReference type="NCBI Taxonomy" id="3702"/>
    <lineage>
        <taxon>Eukaryota</taxon>
        <taxon>Viridiplantae</taxon>
        <taxon>Streptophyta</taxon>
        <taxon>Embryophyta</taxon>
        <taxon>Tracheophyta</taxon>
        <taxon>Spermatophyta</taxon>
        <taxon>Magnoliopsida</taxon>
        <taxon>eudicotyledons</taxon>
        <taxon>Gunneridae</taxon>
        <taxon>Pentapetalae</taxon>
        <taxon>rosids</taxon>
        <taxon>malvids</taxon>
        <taxon>Brassicales</taxon>
        <taxon>Brassicaceae</taxon>
        <taxon>Camelineae</taxon>
        <taxon>Arabidopsis</taxon>
    </lineage>
</organism>
<keyword id="KW-0025">Alternative splicing</keyword>
<keyword id="KW-1003">Cell membrane</keyword>
<keyword id="KW-0438">Lignin biosynthesis</keyword>
<keyword id="KW-0472">Membrane</keyword>
<keyword id="KW-1185">Reference proteome</keyword>
<keyword id="KW-0732">Signal</keyword>
<keyword id="KW-0812">Transmembrane</keyword>
<keyword id="KW-1133">Transmembrane helix</keyword>
<gene>
    <name evidence="3" type="primary">MWL1</name>
    <name evidence="5" type="ordered locus">At1g31720</name>
    <name evidence="6" type="ORF">F27M3.8</name>
</gene>
<dbReference type="EMBL" id="AC074360">
    <property type="protein sequence ID" value="AAG60140.1"/>
    <property type="status" value="ALT_SEQ"/>
    <property type="molecule type" value="Genomic_DNA"/>
</dbReference>
<dbReference type="EMBL" id="CP002684">
    <property type="protein sequence ID" value="AEE31385.1"/>
    <property type="molecule type" value="Genomic_DNA"/>
</dbReference>
<dbReference type="EMBL" id="CP002684">
    <property type="protein sequence ID" value="ANM59003.1"/>
    <property type="molecule type" value="Genomic_DNA"/>
</dbReference>
<dbReference type="EMBL" id="BT030082">
    <property type="protein sequence ID" value="ABN04820.1"/>
    <property type="molecule type" value="mRNA"/>
</dbReference>
<dbReference type="RefSeq" id="NP_001321400.1">
    <property type="nucleotide sequence ID" value="NM_001332972.1"/>
</dbReference>
<dbReference type="RefSeq" id="NP_174453.2">
    <property type="nucleotide sequence ID" value="NM_102907.2"/>
</dbReference>
<dbReference type="SMR" id="A2RVU1"/>
<dbReference type="FunCoup" id="A2RVU1">
    <property type="interactions" value="1"/>
</dbReference>
<dbReference type="IntAct" id="A2RVU1">
    <property type="interactions" value="1"/>
</dbReference>
<dbReference type="STRING" id="3702.A2RVU1"/>
<dbReference type="PaxDb" id="3702-AT1G31720.1"/>
<dbReference type="GeneID" id="840059"/>
<dbReference type="KEGG" id="ath:AT1G31720"/>
<dbReference type="Araport" id="AT1G31720"/>
<dbReference type="TAIR" id="AT1G31720">
    <property type="gene designation" value="MWL1"/>
</dbReference>
<dbReference type="eggNOG" id="ENOG502S1EJ">
    <property type="taxonomic scope" value="Eukaryota"/>
</dbReference>
<dbReference type="HOGENOM" id="CLU_110866_0_0_1"/>
<dbReference type="InParanoid" id="A2RVU1"/>
<dbReference type="PhylomeDB" id="A2RVU1"/>
<dbReference type="PRO" id="PR:A2RVU1"/>
<dbReference type="Proteomes" id="UP000006548">
    <property type="component" value="Chromosome 1"/>
</dbReference>
<dbReference type="ExpressionAtlas" id="A2RVU1">
    <property type="expression patterns" value="baseline and differential"/>
</dbReference>
<dbReference type="GO" id="GO:0016020">
    <property type="term" value="C:membrane"/>
    <property type="evidence" value="ECO:0000314"/>
    <property type="project" value="TAIR"/>
</dbReference>
<dbReference type="GO" id="GO:0005886">
    <property type="term" value="C:plasma membrane"/>
    <property type="evidence" value="ECO:0000314"/>
    <property type="project" value="UniProtKB"/>
</dbReference>
<dbReference type="GO" id="GO:0009809">
    <property type="term" value="P:lignin biosynthetic process"/>
    <property type="evidence" value="ECO:0007669"/>
    <property type="project" value="UniProtKB-KW"/>
</dbReference>
<dbReference type="GO" id="GO:0009808">
    <property type="term" value="P:lignin metabolic process"/>
    <property type="evidence" value="ECO:0000316"/>
    <property type="project" value="TAIR"/>
</dbReference>
<dbReference type="InterPro" id="IPR009606">
    <property type="entry name" value="DEAL/Modifying_wall_lignin1/2"/>
</dbReference>
<dbReference type="InterPro" id="IPR052222">
    <property type="entry name" value="DESIGUAL"/>
</dbReference>
<dbReference type="PANTHER" id="PTHR31769">
    <property type="entry name" value="OS07G0462200 PROTEIN-RELATED"/>
    <property type="match status" value="1"/>
</dbReference>
<dbReference type="Pfam" id="PF06749">
    <property type="entry name" value="DUF1218"/>
    <property type="match status" value="1"/>
</dbReference>
<reference key="1">
    <citation type="journal article" date="2000" name="Nature">
        <title>Sequence and analysis of chromosome 1 of the plant Arabidopsis thaliana.</title>
        <authorList>
            <person name="Theologis A."/>
            <person name="Ecker J.R."/>
            <person name="Palm C.J."/>
            <person name="Federspiel N.A."/>
            <person name="Kaul S."/>
            <person name="White O."/>
            <person name="Alonso J."/>
            <person name="Altafi H."/>
            <person name="Araujo R."/>
            <person name="Bowman C.L."/>
            <person name="Brooks S.Y."/>
            <person name="Buehler E."/>
            <person name="Chan A."/>
            <person name="Chao Q."/>
            <person name="Chen H."/>
            <person name="Cheuk R.F."/>
            <person name="Chin C.W."/>
            <person name="Chung M.K."/>
            <person name="Conn L."/>
            <person name="Conway A.B."/>
            <person name="Conway A.R."/>
            <person name="Creasy T.H."/>
            <person name="Dewar K."/>
            <person name="Dunn P."/>
            <person name="Etgu P."/>
            <person name="Feldblyum T.V."/>
            <person name="Feng J.-D."/>
            <person name="Fong B."/>
            <person name="Fujii C.Y."/>
            <person name="Gill J.E."/>
            <person name="Goldsmith A.D."/>
            <person name="Haas B."/>
            <person name="Hansen N.F."/>
            <person name="Hughes B."/>
            <person name="Huizar L."/>
            <person name="Hunter J.L."/>
            <person name="Jenkins J."/>
            <person name="Johnson-Hopson C."/>
            <person name="Khan S."/>
            <person name="Khaykin E."/>
            <person name="Kim C.J."/>
            <person name="Koo H.L."/>
            <person name="Kremenetskaia I."/>
            <person name="Kurtz D.B."/>
            <person name="Kwan A."/>
            <person name="Lam B."/>
            <person name="Langin-Hooper S."/>
            <person name="Lee A."/>
            <person name="Lee J.M."/>
            <person name="Lenz C.A."/>
            <person name="Li J.H."/>
            <person name="Li Y.-P."/>
            <person name="Lin X."/>
            <person name="Liu S.X."/>
            <person name="Liu Z.A."/>
            <person name="Luros J.S."/>
            <person name="Maiti R."/>
            <person name="Marziali A."/>
            <person name="Militscher J."/>
            <person name="Miranda M."/>
            <person name="Nguyen M."/>
            <person name="Nierman W.C."/>
            <person name="Osborne B.I."/>
            <person name="Pai G."/>
            <person name="Peterson J."/>
            <person name="Pham P.K."/>
            <person name="Rizzo M."/>
            <person name="Rooney T."/>
            <person name="Rowley D."/>
            <person name="Sakano H."/>
            <person name="Salzberg S.L."/>
            <person name="Schwartz J.R."/>
            <person name="Shinn P."/>
            <person name="Southwick A.M."/>
            <person name="Sun H."/>
            <person name="Tallon L.J."/>
            <person name="Tambunga G."/>
            <person name="Toriumi M.J."/>
            <person name="Town C.D."/>
            <person name="Utterback T."/>
            <person name="Van Aken S."/>
            <person name="Vaysberg M."/>
            <person name="Vysotskaia V.S."/>
            <person name="Walker M."/>
            <person name="Wu D."/>
            <person name="Yu G."/>
            <person name="Fraser C.M."/>
            <person name="Venter J.C."/>
            <person name="Davis R.W."/>
        </authorList>
    </citation>
    <scope>NUCLEOTIDE SEQUENCE [LARGE SCALE GENOMIC DNA]</scope>
    <source>
        <strain>cv. Columbia</strain>
    </source>
</reference>
<reference key="2">
    <citation type="journal article" date="2017" name="Plant J.">
        <title>Araport11: a complete reannotation of the Arabidopsis thaliana reference genome.</title>
        <authorList>
            <person name="Cheng C.Y."/>
            <person name="Krishnakumar V."/>
            <person name="Chan A.P."/>
            <person name="Thibaud-Nissen F."/>
            <person name="Schobel S."/>
            <person name="Town C.D."/>
        </authorList>
    </citation>
    <scope>GENOME REANNOTATION</scope>
    <source>
        <strain>cv. Columbia</strain>
    </source>
</reference>
<reference key="3">
    <citation type="submission" date="2007-01" db="EMBL/GenBank/DDBJ databases">
        <title>Arabidopsis ORF clones.</title>
        <authorList>
            <person name="Kim C.J."/>
            <person name="Bautista V.R."/>
            <person name="Chen H."/>
            <person name="De Los Reyes C."/>
            <person name="Wu S.Y."/>
            <person name="Ecker J.R."/>
        </authorList>
    </citation>
    <scope>NUCLEOTIDE SEQUENCE [LARGE SCALE MRNA] (ISOFORM 3)</scope>
    <source>
        <strain>cv. Columbia</strain>
    </source>
</reference>
<reference key="4">
    <citation type="journal article" date="2016" name="PLoS ONE">
        <title>The Arabidopsis domain of unknown function 1218 (DUF1218) containing proteins, MODIFYING WALL LIGNIN-1 and 2 (At1g31720/MWL-1 and At4g19370/MWL-2) function redundantly to alter secondary cell wall lignin content.</title>
        <authorList>
            <person name="Mewalal R."/>
            <person name="Mizrachi E."/>
            <person name="Coetzee B."/>
            <person name="Mansfield S.D."/>
            <person name="Myburg A.A."/>
        </authorList>
    </citation>
    <scope>FUNCTION</scope>
    <scope>DISRUPTION PHENOTYPE</scope>
    <scope>SUBCELLULAR LOCATION</scope>
    <scope>INTERACTION WITH CRK19</scope>
    <source>
        <strain>cv. Columbia</strain>
    </source>
</reference>
<protein>
    <recommendedName>
        <fullName evidence="3">Protein MODIFYING WALL LIGNIN-1</fullName>
        <shortName evidence="3">MWL-1</shortName>
    </recommendedName>
</protein>
<proteinExistence type="evidence at protein level"/>
<accession>A2RVU1</accession>
<accession>A0A1P8AQR9</accession>
<accession>Q9C6W2</accession>
<comment type="function">
    <text evidence="2">Together with MWL2, contributes to secondary cell wall biology, specifically lignin biosynthesis.</text>
</comment>
<comment type="subunit">
    <text evidence="2">Interacts with CRK19.</text>
</comment>
<comment type="subcellular location">
    <subcellularLocation>
        <location evidence="2">Cell membrane</location>
        <topology evidence="1">Multi-pass membrane protein</topology>
    </subcellularLocation>
</comment>
<comment type="alternative products">
    <event type="alternative splicing"/>
    <isoform>
        <id>A2RVU1-1</id>
        <name>1</name>
        <sequence type="displayed"/>
    </isoform>
    <isoform>
        <id>A2RVU1-2</id>
        <name>2</name>
        <sequence type="described" ref="VSP_060122"/>
    </isoform>
    <isoform>
        <id>A2RVU1-3</id>
        <name>3</name>
        <sequence type="described" ref="VSP_060121"/>
    </isoform>
</comment>
<comment type="disruption phenotype">
    <text evidence="2">No visible phenotype. Double mutants lacking both MWL1 and MWL2 exhibit smaller rosettes with a decrease in rosette fresh weight and stem height associated with a reduction in total lignin content and an increase in syringyl/guaiacyl (S/G) monomer ratio.</text>
</comment>
<comment type="similarity">
    <text evidence="4">Belongs to the DESIGUAL family.</text>
</comment>
<comment type="sequence caution" evidence="4">
    <conflict type="erroneous gene model prediction">
        <sequence resource="EMBL-CDS" id="AAG60140"/>
    </conflict>
</comment>
<evidence type="ECO:0000255" key="1"/>
<evidence type="ECO:0000269" key="2">
    <source>
    </source>
</evidence>
<evidence type="ECO:0000303" key="3">
    <source>
    </source>
</evidence>
<evidence type="ECO:0000305" key="4"/>
<evidence type="ECO:0000312" key="5">
    <source>
        <dbReference type="Araport" id="AT1G31720"/>
    </source>
</evidence>
<evidence type="ECO:0000312" key="6">
    <source>
        <dbReference type="EMBL" id="AAG60140.1"/>
    </source>
</evidence>
<name>MWL1_ARATH</name>
<feature type="signal peptide" evidence="1">
    <location>
        <begin position="1"/>
        <end position="24"/>
    </location>
</feature>
<feature type="chain" id="PRO_0000446979" description="Protein MODIFYING WALL LIGNIN-1">
    <location>
        <begin position="25"/>
        <end position="175"/>
    </location>
</feature>
<feature type="topological domain" description="Cytoplasmic" evidence="4">
    <location>
        <begin position="25"/>
        <end position="52"/>
    </location>
</feature>
<feature type="transmembrane region" description="Helical" evidence="1">
    <location>
        <begin position="53"/>
        <end position="73"/>
    </location>
</feature>
<feature type="topological domain" description="Extracellular" evidence="4">
    <location>
        <begin position="74"/>
        <end position="86"/>
    </location>
</feature>
<feature type="transmembrane region" description="Helical" evidence="1">
    <location>
        <begin position="87"/>
        <end position="107"/>
    </location>
</feature>
<feature type="topological domain" description="Cytoplasmic" evidence="4">
    <location>
        <begin position="108"/>
        <end position="135"/>
    </location>
</feature>
<feature type="transmembrane region" description="Helical" evidence="1">
    <location>
        <begin position="136"/>
        <end position="156"/>
    </location>
</feature>
<feature type="topological domain" description="Extracellular" evidence="4">
    <location>
        <begin position="157"/>
        <end position="175"/>
    </location>
</feature>
<feature type="splice variant" id="VSP_060121" description="In isoform 3.">
    <original>M</original>
    <variation>MEIQKQDNRDGRPKSFLFF</variation>
    <location>
        <position position="1"/>
    </location>
</feature>
<feature type="splice variant" id="VSP_060122" description="In isoform 2.">
    <location>
        <begin position="23"/>
        <end position="32"/>
    </location>
</feature>